<dbReference type="EMBL" id="CP000036">
    <property type="protein sequence ID" value="ABB67798.1"/>
    <property type="molecule type" value="Genomic_DNA"/>
</dbReference>
<dbReference type="RefSeq" id="WP_001138117.1">
    <property type="nucleotide sequence ID" value="NC_007613.1"/>
</dbReference>
<dbReference type="SMR" id="Q31VW0"/>
<dbReference type="GeneID" id="98390438"/>
<dbReference type="KEGG" id="sbo:SBO_3310"/>
<dbReference type="HOGENOM" id="CLU_144911_0_1_6"/>
<dbReference type="Proteomes" id="UP000007067">
    <property type="component" value="Chromosome"/>
</dbReference>
<dbReference type="GO" id="GO:0005737">
    <property type="term" value="C:cytoplasm"/>
    <property type="evidence" value="ECO:0007669"/>
    <property type="project" value="UniProtKB-ARBA"/>
</dbReference>
<dbReference type="GO" id="GO:0015935">
    <property type="term" value="C:small ribosomal subunit"/>
    <property type="evidence" value="ECO:0007669"/>
    <property type="project" value="InterPro"/>
</dbReference>
<dbReference type="GO" id="GO:0019843">
    <property type="term" value="F:rRNA binding"/>
    <property type="evidence" value="ECO:0007669"/>
    <property type="project" value="UniProtKB-UniRule"/>
</dbReference>
<dbReference type="GO" id="GO:0003735">
    <property type="term" value="F:structural constituent of ribosome"/>
    <property type="evidence" value="ECO:0007669"/>
    <property type="project" value="InterPro"/>
</dbReference>
<dbReference type="GO" id="GO:0000028">
    <property type="term" value="P:ribosomal small subunit assembly"/>
    <property type="evidence" value="ECO:0007669"/>
    <property type="project" value="TreeGrafter"/>
</dbReference>
<dbReference type="GO" id="GO:0006412">
    <property type="term" value="P:translation"/>
    <property type="evidence" value="ECO:0007669"/>
    <property type="project" value="UniProtKB-UniRule"/>
</dbReference>
<dbReference type="FunFam" id="3.30.860.10:FF:000001">
    <property type="entry name" value="30S ribosomal protein S19"/>
    <property type="match status" value="1"/>
</dbReference>
<dbReference type="Gene3D" id="3.30.860.10">
    <property type="entry name" value="30s Ribosomal Protein S19, Chain A"/>
    <property type="match status" value="1"/>
</dbReference>
<dbReference type="HAMAP" id="MF_00531">
    <property type="entry name" value="Ribosomal_uS19"/>
    <property type="match status" value="1"/>
</dbReference>
<dbReference type="InterPro" id="IPR002222">
    <property type="entry name" value="Ribosomal_uS19"/>
</dbReference>
<dbReference type="InterPro" id="IPR005732">
    <property type="entry name" value="Ribosomal_uS19_bac-type"/>
</dbReference>
<dbReference type="InterPro" id="IPR020934">
    <property type="entry name" value="Ribosomal_uS19_CS"/>
</dbReference>
<dbReference type="InterPro" id="IPR023575">
    <property type="entry name" value="Ribosomal_uS19_SF"/>
</dbReference>
<dbReference type="NCBIfam" id="TIGR01050">
    <property type="entry name" value="rpsS_bact"/>
    <property type="match status" value="1"/>
</dbReference>
<dbReference type="PANTHER" id="PTHR11880">
    <property type="entry name" value="RIBOSOMAL PROTEIN S19P FAMILY MEMBER"/>
    <property type="match status" value="1"/>
</dbReference>
<dbReference type="PANTHER" id="PTHR11880:SF8">
    <property type="entry name" value="SMALL RIBOSOMAL SUBUNIT PROTEIN US19M"/>
    <property type="match status" value="1"/>
</dbReference>
<dbReference type="Pfam" id="PF00203">
    <property type="entry name" value="Ribosomal_S19"/>
    <property type="match status" value="1"/>
</dbReference>
<dbReference type="PIRSF" id="PIRSF002144">
    <property type="entry name" value="Ribosomal_S19"/>
    <property type="match status" value="1"/>
</dbReference>
<dbReference type="PRINTS" id="PR00975">
    <property type="entry name" value="RIBOSOMALS19"/>
</dbReference>
<dbReference type="SUPFAM" id="SSF54570">
    <property type="entry name" value="Ribosomal protein S19"/>
    <property type="match status" value="1"/>
</dbReference>
<dbReference type="PROSITE" id="PS00323">
    <property type="entry name" value="RIBOSOMAL_S19"/>
    <property type="match status" value="1"/>
</dbReference>
<protein>
    <recommendedName>
        <fullName evidence="1">Small ribosomal subunit protein uS19</fullName>
    </recommendedName>
    <alternativeName>
        <fullName evidence="2">30S ribosomal protein S19</fullName>
    </alternativeName>
</protein>
<sequence length="92" mass="10430">MPRSLKKGPFIDLHLLKKVEKAVESGDKKPLRTWSRRSTIFPNMIGLTIAVHNGRQHVPVFVTDEMVGHKLGEFAPTRTYRGHAADKKAKKK</sequence>
<evidence type="ECO:0000255" key="1">
    <source>
        <dbReference type="HAMAP-Rule" id="MF_00531"/>
    </source>
</evidence>
<evidence type="ECO:0000305" key="2"/>
<reference key="1">
    <citation type="journal article" date="2005" name="Nucleic Acids Res.">
        <title>Genome dynamics and diversity of Shigella species, the etiologic agents of bacillary dysentery.</title>
        <authorList>
            <person name="Yang F."/>
            <person name="Yang J."/>
            <person name="Zhang X."/>
            <person name="Chen L."/>
            <person name="Jiang Y."/>
            <person name="Yan Y."/>
            <person name="Tang X."/>
            <person name="Wang J."/>
            <person name="Xiong Z."/>
            <person name="Dong J."/>
            <person name="Xue Y."/>
            <person name="Zhu Y."/>
            <person name="Xu X."/>
            <person name="Sun L."/>
            <person name="Chen S."/>
            <person name="Nie H."/>
            <person name="Peng J."/>
            <person name="Xu J."/>
            <person name="Wang Y."/>
            <person name="Yuan Z."/>
            <person name="Wen Y."/>
            <person name="Yao Z."/>
            <person name="Shen Y."/>
            <person name="Qiang B."/>
            <person name="Hou Y."/>
            <person name="Yu J."/>
            <person name="Jin Q."/>
        </authorList>
    </citation>
    <scope>NUCLEOTIDE SEQUENCE [LARGE SCALE GENOMIC DNA]</scope>
    <source>
        <strain>Sb227</strain>
    </source>
</reference>
<proteinExistence type="inferred from homology"/>
<name>RS19_SHIBS</name>
<accession>Q31VW0</accession>
<comment type="function">
    <text evidence="1">Protein S19 forms a complex with S13 that binds strongly to the 16S ribosomal RNA.</text>
</comment>
<comment type="similarity">
    <text evidence="1">Belongs to the universal ribosomal protein uS19 family.</text>
</comment>
<keyword id="KW-0687">Ribonucleoprotein</keyword>
<keyword id="KW-0689">Ribosomal protein</keyword>
<keyword id="KW-0694">RNA-binding</keyword>
<keyword id="KW-0699">rRNA-binding</keyword>
<organism>
    <name type="scientific">Shigella boydii serotype 4 (strain Sb227)</name>
    <dbReference type="NCBI Taxonomy" id="300268"/>
    <lineage>
        <taxon>Bacteria</taxon>
        <taxon>Pseudomonadati</taxon>
        <taxon>Pseudomonadota</taxon>
        <taxon>Gammaproteobacteria</taxon>
        <taxon>Enterobacterales</taxon>
        <taxon>Enterobacteriaceae</taxon>
        <taxon>Shigella</taxon>
    </lineage>
</organism>
<feature type="chain" id="PRO_0000265431" description="Small ribosomal subunit protein uS19">
    <location>
        <begin position="1"/>
        <end position="92"/>
    </location>
</feature>
<gene>
    <name evidence="1" type="primary">rpsS</name>
    <name type="ordered locus">SBO_3310</name>
</gene>